<accession>Q879S5</accession>
<gene>
    <name evidence="1" type="primary">mnmE</name>
    <name evidence="1" type="synonym">thdF</name>
    <name evidence="1" type="synonym">trmE</name>
    <name type="ordered locus">PD_2119</name>
</gene>
<organism>
    <name type="scientific">Xylella fastidiosa (strain Temecula1 / ATCC 700964)</name>
    <dbReference type="NCBI Taxonomy" id="183190"/>
    <lineage>
        <taxon>Bacteria</taxon>
        <taxon>Pseudomonadati</taxon>
        <taxon>Pseudomonadota</taxon>
        <taxon>Gammaproteobacteria</taxon>
        <taxon>Lysobacterales</taxon>
        <taxon>Lysobacteraceae</taxon>
        <taxon>Xylella</taxon>
    </lineage>
</organism>
<sequence length="451" mass="49040">MSQRSTKMGDTIAAIATASGAAGIGIIRISGSQIKTIATGLGMTTLRPRYAHYTRFLDVDDQVIDDGLAIWFPAPHSFTGEDVLELQGHGSPLLLRQLLTRCLDLGARQARPGEFSERAFLNGKLDLIQAEAIADMIGAADLRAARAARRSLDGVFSRRCEALAQQLVRLRIHVEATIDFADESLDTLDRAQIRTSLQTLNVELTQLLRDAEHGKRLCDGLYTVLVGPPNVGKSSLLNALIGSDRAIVTDVPGTTRDTLRESVHFHGLEFVLVDTAGLRGEGDAIEREGMRRTLNELQRADLALVVLDACDPQIGSLALADALTSVPRVLWIHNKLDLLTEPPSVLDTDVIPVSAMTGAGLDTLKTRLRTLLLGETVETIEGEFSARLRHVQALQRTAAHVTDANAQFSYEHLELTAEELRLAYKALGEINGSMSPDELLGRIFSNFCIGK</sequence>
<keyword id="KW-0963">Cytoplasm</keyword>
<keyword id="KW-0342">GTP-binding</keyword>
<keyword id="KW-0378">Hydrolase</keyword>
<keyword id="KW-0460">Magnesium</keyword>
<keyword id="KW-0479">Metal-binding</keyword>
<keyword id="KW-0547">Nucleotide-binding</keyword>
<keyword id="KW-0630">Potassium</keyword>
<keyword id="KW-1185">Reference proteome</keyword>
<keyword id="KW-0819">tRNA processing</keyword>
<comment type="function">
    <text evidence="1">Exhibits a very high intrinsic GTPase hydrolysis rate. Involved in the addition of a carboxymethylaminomethyl (cmnm) group at the wobble position (U34) of certain tRNAs, forming tRNA-cmnm(5)s(2)U34.</text>
</comment>
<comment type="cofactor">
    <cofactor evidence="1">
        <name>K(+)</name>
        <dbReference type="ChEBI" id="CHEBI:29103"/>
    </cofactor>
    <text evidence="1">Binds 1 potassium ion per subunit.</text>
</comment>
<comment type="subunit">
    <text evidence="1">Homodimer. Heterotetramer of two MnmE and two MnmG subunits.</text>
</comment>
<comment type="subcellular location">
    <subcellularLocation>
        <location evidence="1">Cytoplasm</location>
    </subcellularLocation>
</comment>
<comment type="similarity">
    <text evidence="1">Belongs to the TRAFAC class TrmE-Era-EngA-EngB-Septin-like GTPase superfamily. TrmE GTPase family.</text>
</comment>
<proteinExistence type="inferred from homology"/>
<protein>
    <recommendedName>
        <fullName evidence="1">tRNA modification GTPase MnmE</fullName>
        <ecNumber evidence="1">3.6.-.-</ecNumber>
    </recommendedName>
</protein>
<dbReference type="EC" id="3.6.-.-" evidence="1"/>
<dbReference type="EMBL" id="AE009442">
    <property type="protein sequence ID" value="AAO29938.1"/>
    <property type="molecule type" value="Genomic_DNA"/>
</dbReference>
<dbReference type="RefSeq" id="WP_011098387.1">
    <property type="nucleotide sequence ID" value="NC_004556.1"/>
</dbReference>
<dbReference type="SMR" id="Q879S5"/>
<dbReference type="GeneID" id="93905994"/>
<dbReference type="KEGG" id="xft:PD_2119"/>
<dbReference type="HOGENOM" id="CLU_019624_4_1_6"/>
<dbReference type="Proteomes" id="UP000002516">
    <property type="component" value="Chromosome"/>
</dbReference>
<dbReference type="GO" id="GO:0005829">
    <property type="term" value="C:cytosol"/>
    <property type="evidence" value="ECO:0007669"/>
    <property type="project" value="TreeGrafter"/>
</dbReference>
<dbReference type="GO" id="GO:0005525">
    <property type="term" value="F:GTP binding"/>
    <property type="evidence" value="ECO:0007669"/>
    <property type="project" value="UniProtKB-UniRule"/>
</dbReference>
<dbReference type="GO" id="GO:0003924">
    <property type="term" value="F:GTPase activity"/>
    <property type="evidence" value="ECO:0007669"/>
    <property type="project" value="UniProtKB-UniRule"/>
</dbReference>
<dbReference type="GO" id="GO:0046872">
    <property type="term" value="F:metal ion binding"/>
    <property type="evidence" value="ECO:0007669"/>
    <property type="project" value="UniProtKB-KW"/>
</dbReference>
<dbReference type="GO" id="GO:0030488">
    <property type="term" value="P:tRNA methylation"/>
    <property type="evidence" value="ECO:0007669"/>
    <property type="project" value="TreeGrafter"/>
</dbReference>
<dbReference type="GO" id="GO:0002098">
    <property type="term" value="P:tRNA wobble uridine modification"/>
    <property type="evidence" value="ECO:0007669"/>
    <property type="project" value="TreeGrafter"/>
</dbReference>
<dbReference type="CDD" id="cd04164">
    <property type="entry name" value="trmE"/>
    <property type="match status" value="1"/>
</dbReference>
<dbReference type="CDD" id="cd14858">
    <property type="entry name" value="TrmE_N"/>
    <property type="match status" value="1"/>
</dbReference>
<dbReference type="FunFam" id="3.40.50.300:FF:001376">
    <property type="entry name" value="tRNA modification GTPase MnmE"/>
    <property type="match status" value="1"/>
</dbReference>
<dbReference type="Gene3D" id="3.40.50.300">
    <property type="entry name" value="P-loop containing nucleotide triphosphate hydrolases"/>
    <property type="match status" value="1"/>
</dbReference>
<dbReference type="Gene3D" id="3.30.1360.120">
    <property type="entry name" value="Probable tRNA modification gtpase trme, domain 1"/>
    <property type="match status" value="1"/>
</dbReference>
<dbReference type="Gene3D" id="1.20.120.430">
    <property type="entry name" value="tRNA modification GTPase MnmE domain 2"/>
    <property type="match status" value="1"/>
</dbReference>
<dbReference type="HAMAP" id="MF_00379">
    <property type="entry name" value="GTPase_MnmE"/>
    <property type="match status" value="1"/>
</dbReference>
<dbReference type="InterPro" id="IPR031168">
    <property type="entry name" value="G_TrmE"/>
</dbReference>
<dbReference type="InterPro" id="IPR006073">
    <property type="entry name" value="GTP-bd"/>
</dbReference>
<dbReference type="InterPro" id="IPR018948">
    <property type="entry name" value="GTP-bd_TrmE_N"/>
</dbReference>
<dbReference type="InterPro" id="IPR004520">
    <property type="entry name" value="GTPase_MnmE"/>
</dbReference>
<dbReference type="InterPro" id="IPR027368">
    <property type="entry name" value="MnmE_dom2"/>
</dbReference>
<dbReference type="InterPro" id="IPR025867">
    <property type="entry name" value="MnmE_helical"/>
</dbReference>
<dbReference type="InterPro" id="IPR027417">
    <property type="entry name" value="P-loop_NTPase"/>
</dbReference>
<dbReference type="InterPro" id="IPR005225">
    <property type="entry name" value="Small_GTP-bd"/>
</dbReference>
<dbReference type="InterPro" id="IPR027266">
    <property type="entry name" value="TrmE/GcvT_dom1"/>
</dbReference>
<dbReference type="NCBIfam" id="TIGR00450">
    <property type="entry name" value="mnmE_trmE_thdF"/>
    <property type="match status" value="1"/>
</dbReference>
<dbReference type="NCBIfam" id="NF003661">
    <property type="entry name" value="PRK05291.1-3"/>
    <property type="match status" value="1"/>
</dbReference>
<dbReference type="NCBIfam" id="TIGR00231">
    <property type="entry name" value="small_GTP"/>
    <property type="match status" value="1"/>
</dbReference>
<dbReference type="PANTHER" id="PTHR42714">
    <property type="entry name" value="TRNA MODIFICATION GTPASE GTPBP3"/>
    <property type="match status" value="1"/>
</dbReference>
<dbReference type="PANTHER" id="PTHR42714:SF2">
    <property type="entry name" value="TRNA MODIFICATION GTPASE GTPBP3, MITOCHONDRIAL"/>
    <property type="match status" value="1"/>
</dbReference>
<dbReference type="Pfam" id="PF01926">
    <property type="entry name" value="MMR_HSR1"/>
    <property type="match status" value="1"/>
</dbReference>
<dbReference type="Pfam" id="PF12631">
    <property type="entry name" value="MnmE_helical"/>
    <property type="match status" value="1"/>
</dbReference>
<dbReference type="Pfam" id="PF10396">
    <property type="entry name" value="TrmE_N"/>
    <property type="match status" value="1"/>
</dbReference>
<dbReference type="PRINTS" id="PR00326">
    <property type="entry name" value="GTP1OBG"/>
</dbReference>
<dbReference type="SUPFAM" id="SSF52540">
    <property type="entry name" value="P-loop containing nucleoside triphosphate hydrolases"/>
    <property type="match status" value="1"/>
</dbReference>
<dbReference type="SUPFAM" id="SSF116878">
    <property type="entry name" value="TrmE connector domain"/>
    <property type="match status" value="1"/>
</dbReference>
<dbReference type="PROSITE" id="PS51709">
    <property type="entry name" value="G_TRME"/>
    <property type="match status" value="1"/>
</dbReference>
<reference key="1">
    <citation type="journal article" date="2003" name="J. Bacteriol.">
        <title>Comparative analyses of the complete genome sequences of Pierce's disease and citrus variegated chlorosis strains of Xylella fastidiosa.</title>
        <authorList>
            <person name="Van Sluys M.A."/>
            <person name="de Oliveira M.C."/>
            <person name="Monteiro-Vitorello C.B."/>
            <person name="Miyaki C.Y."/>
            <person name="Furlan L.R."/>
            <person name="Camargo L.E.A."/>
            <person name="da Silva A.C.R."/>
            <person name="Moon D.H."/>
            <person name="Takita M.A."/>
            <person name="Lemos E.G.M."/>
            <person name="Machado M.A."/>
            <person name="Ferro M.I.T."/>
            <person name="da Silva F.R."/>
            <person name="Goldman M.H.S."/>
            <person name="Goldman G.H."/>
            <person name="Lemos M.V.F."/>
            <person name="El-Dorry H."/>
            <person name="Tsai S.M."/>
            <person name="Carrer H."/>
            <person name="Carraro D.M."/>
            <person name="de Oliveira R.C."/>
            <person name="Nunes L.R."/>
            <person name="Siqueira W.J."/>
            <person name="Coutinho L.L."/>
            <person name="Kimura E.T."/>
            <person name="Ferro E.S."/>
            <person name="Harakava R."/>
            <person name="Kuramae E.E."/>
            <person name="Marino C.L."/>
            <person name="Giglioti E."/>
            <person name="Abreu I.L."/>
            <person name="Alves L.M.C."/>
            <person name="do Amaral A.M."/>
            <person name="Baia G.S."/>
            <person name="Blanco S.R."/>
            <person name="Brito M.S."/>
            <person name="Cannavan F.S."/>
            <person name="Celestino A.V."/>
            <person name="da Cunha A.F."/>
            <person name="Fenille R.C."/>
            <person name="Ferro J.A."/>
            <person name="Formighieri E.F."/>
            <person name="Kishi L.T."/>
            <person name="Leoni S.G."/>
            <person name="Oliveira A.R."/>
            <person name="Rosa V.E. Jr."/>
            <person name="Sassaki F.T."/>
            <person name="Sena J.A.D."/>
            <person name="de Souza A.A."/>
            <person name="Truffi D."/>
            <person name="Tsukumo F."/>
            <person name="Yanai G.M."/>
            <person name="Zaros L.G."/>
            <person name="Civerolo E.L."/>
            <person name="Simpson A.J.G."/>
            <person name="Almeida N.F. Jr."/>
            <person name="Setubal J.C."/>
            <person name="Kitajima J.P."/>
        </authorList>
    </citation>
    <scope>NUCLEOTIDE SEQUENCE [LARGE SCALE GENOMIC DNA]</scope>
    <source>
        <strain>Temecula1 / ATCC 700964</strain>
    </source>
</reference>
<evidence type="ECO:0000255" key="1">
    <source>
        <dbReference type="HAMAP-Rule" id="MF_00379"/>
    </source>
</evidence>
<feature type="chain" id="PRO_0000188951" description="tRNA modification GTPase MnmE">
    <location>
        <begin position="1"/>
        <end position="451"/>
    </location>
</feature>
<feature type="domain" description="TrmE-type G">
    <location>
        <begin position="220"/>
        <end position="373"/>
    </location>
</feature>
<feature type="binding site" evidence="1">
    <location>
        <position position="28"/>
    </location>
    <ligand>
        <name>(6S)-5-formyl-5,6,7,8-tetrahydrofolate</name>
        <dbReference type="ChEBI" id="CHEBI:57457"/>
    </ligand>
</feature>
<feature type="binding site" evidence="1">
    <location>
        <position position="85"/>
    </location>
    <ligand>
        <name>(6S)-5-formyl-5,6,7,8-tetrahydrofolate</name>
        <dbReference type="ChEBI" id="CHEBI:57457"/>
    </ligand>
</feature>
<feature type="binding site" evidence="1">
    <location>
        <position position="124"/>
    </location>
    <ligand>
        <name>(6S)-5-formyl-5,6,7,8-tetrahydrofolate</name>
        <dbReference type="ChEBI" id="CHEBI:57457"/>
    </ligand>
</feature>
<feature type="binding site" evidence="1">
    <location>
        <begin position="230"/>
        <end position="235"/>
    </location>
    <ligand>
        <name>GTP</name>
        <dbReference type="ChEBI" id="CHEBI:37565"/>
    </ligand>
</feature>
<feature type="binding site" evidence="1">
    <location>
        <position position="230"/>
    </location>
    <ligand>
        <name>K(+)</name>
        <dbReference type="ChEBI" id="CHEBI:29103"/>
    </ligand>
</feature>
<feature type="binding site" evidence="1">
    <location>
        <position position="234"/>
    </location>
    <ligand>
        <name>Mg(2+)</name>
        <dbReference type="ChEBI" id="CHEBI:18420"/>
    </ligand>
</feature>
<feature type="binding site" evidence="1">
    <location>
        <begin position="249"/>
        <end position="255"/>
    </location>
    <ligand>
        <name>GTP</name>
        <dbReference type="ChEBI" id="CHEBI:37565"/>
    </ligand>
</feature>
<feature type="binding site" evidence="1">
    <location>
        <position position="249"/>
    </location>
    <ligand>
        <name>K(+)</name>
        <dbReference type="ChEBI" id="CHEBI:29103"/>
    </ligand>
</feature>
<feature type="binding site" evidence="1">
    <location>
        <position position="251"/>
    </location>
    <ligand>
        <name>K(+)</name>
        <dbReference type="ChEBI" id="CHEBI:29103"/>
    </ligand>
</feature>
<feature type="binding site" evidence="1">
    <location>
        <position position="254"/>
    </location>
    <ligand>
        <name>K(+)</name>
        <dbReference type="ChEBI" id="CHEBI:29103"/>
    </ligand>
</feature>
<feature type="binding site" evidence="1">
    <location>
        <position position="255"/>
    </location>
    <ligand>
        <name>Mg(2+)</name>
        <dbReference type="ChEBI" id="CHEBI:18420"/>
    </ligand>
</feature>
<feature type="binding site" evidence="1">
    <location>
        <begin position="274"/>
        <end position="277"/>
    </location>
    <ligand>
        <name>GTP</name>
        <dbReference type="ChEBI" id="CHEBI:37565"/>
    </ligand>
</feature>
<feature type="binding site" evidence="1">
    <location>
        <position position="451"/>
    </location>
    <ligand>
        <name>(6S)-5-formyl-5,6,7,8-tetrahydrofolate</name>
        <dbReference type="ChEBI" id="CHEBI:57457"/>
    </ligand>
</feature>
<name>MNME_XYLFT</name>